<protein>
    <recommendedName>
        <fullName evidence="1">Glycerol kinase</fullName>
        <ecNumber evidence="1">2.7.1.30</ecNumber>
    </recommendedName>
    <alternativeName>
        <fullName evidence="1">ATP:glycerol 3-phosphotransferase</fullName>
    </alternativeName>
    <alternativeName>
        <fullName evidence="1">Glycerokinase</fullName>
        <shortName evidence="1">GK</shortName>
    </alternativeName>
</protein>
<comment type="function">
    <text evidence="1">Key enzyme in the regulation of glycerol uptake and metabolism. Catalyzes the phosphorylation of glycerol to yield sn-glycerol 3-phosphate.</text>
</comment>
<comment type="catalytic activity">
    <reaction evidence="1">
        <text>glycerol + ATP = sn-glycerol 3-phosphate + ADP + H(+)</text>
        <dbReference type="Rhea" id="RHEA:21644"/>
        <dbReference type="ChEBI" id="CHEBI:15378"/>
        <dbReference type="ChEBI" id="CHEBI:17754"/>
        <dbReference type="ChEBI" id="CHEBI:30616"/>
        <dbReference type="ChEBI" id="CHEBI:57597"/>
        <dbReference type="ChEBI" id="CHEBI:456216"/>
        <dbReference type="EC" id="2.7.1.30"/>
    </reaction>
</comment>
<comment type="activity regulation">
    <text evidence="1">Inhibited by fructose 1,6-bisphosphate (FBP).</text>
</comment>
<comment type="pathway">
    <text evidence="1">Polyol metabolism; glycerol degradation via glycerol kinase pathway; sn-glycerol 3-phosphate from glycerol: step 1/1.</text>
</comment>
<comment type="similarity">
    <text evidence="1">Belongs to the FGGY kinase family.</text>
</comment>
<sequence>MTEQKYVVALDQGTTSSRAVVLDHDANIVSVSQREFTQIYPQAGWVEHDPMEIYATQSSTLVEALGKAGIRSDEVAAIGITNQRETTVVWNKETGKPVYNAIVWQCRRTAAICEELKARGLESYIRDNTGLVLDPYFSGTKIKWILDNVEGAREQAEAGQLLFGTVDTWLVWKMTQGRVHVTDYTNASRTMLFNINTLQWDEKILAEFNIPLSMMPEVKKSSEVYGQTNIGGKGGTRIPIAGIAGDQQAALYGQMCVQAGQAKNTYGTGCFLLMNTGQEKVTSNNGLLTTLACGPRGEPAYALEGAVFMGGASIQWLRDELKLISDARDSEYFATKVDTSNGVYVVPAFTGLGAPYWDAYARGTIVGLTRGVNSNHIIRATLESIAYQTRDVLDAMQADSGIKLSALRVDGGAVANNFLMQFQADVLDTEVHRPKVTEVTALGAAYLAGLAVGFWDGLEELQGKAEIDRSFKPHHDEEKRQRRYKGWKRAVKCAQAWAVLHNEEE</sequence>
<organism>
    <name type="scientific">Vibrio cholerae serotype O1 (strain M66-2)</name>
    <dbReference type="NCBI Taxonomy" id="579112"/>
    <lineage>
        <taxon>Bacteria</taxon>
        <taxon>Pseudomonadati</taxon>
        <taxon>Pseudomonadota</taxon>
        <taxon>Gammaproteobacteria</taxon>
        <taxon>Vibrionales</taxon>
        <taxon>Vibrionaceae</taxon>
        <taxon>Vibrio</taxon>
    </lineage>
</organism>
<proteinExistence type="inferred from homology"/>
<accession>C3LW10</accession>
<evidence type="ECO:0000255" key="1">
    <source>
        <dbReference type="HAMAP-Rule" id="MF_00186"/>
    </source>
</evidence>
<name>GLPK_VIBCM</name>
<feature type="chain" id="PRO_1000124211" description="Glycerol kinase">
    <location>
        <begin position="1"/>
        <end position="505"/>
    </location>
</feature>
<feature type="binding site" evidence="1">
    <location>
        <position position="14"/>
    </location>
    <ligand>
        <name>ADP</name>
        <dbReference type="ChEBI" id="CHEBI:456216"/>
    </ligand>
</feature>
<feature type="binding site" evidence="1">
    <location>
        <position position="14"/>
    </location>
    <ligand>
        <name>ATP</name>
        <dbReference type="ChEBI" id="CHEBI:30616"/>
    </ligand>
</feature>
<feature type="binding site" evidence="1">
    <location>
        <position position="14"/>
    </location>
    <ligand>
        <name>sn-glycerol 3-phosphate</name>
        <dbReference type="ChEBI" id="CHEBI:57597"/>
    </ligand>
</feature>
<feature type="binding site" evidence="1">
    <location>
        <position position="15"/>
    </location>
    <ligand>
        <name>ATP</name>
        <dbReference type="ChEBI" id="CHEBI:30616"/>
    </ligand>
</feature>
<feature type="binding site" evidence="1">
    <location>
        <position position="16"/>
    </location>
    <ligand>
        <name>ATP</name>
        <dbReference type="ChEBI" id="CHEBI:30616"/>
    </ligand>
</feature>
<feature type="binding site" evidence="1">
    <location>
        <position position="18"/>
    </location>
    <ligand>
        <name>ADP</name>
        <dbReference type="ChEBI" id="CHEBI:456216"/>
    </ligand>
</feature>
<feature type="binding site" evidence="1">
    <location>
        <position position="84"/>
    </location>
    <ligand>
        <name>glycerol</name>
        <dbReference type="ChEBI" id="CHEBI:17754"/>
    </ligand>
</feature>
<feature type="binding site" evidence="1">
    <location>
        <position position="84"/>
    </location>
    <ligand>
        <name>sn-glycerol 3-phosphate</name>
        <dbReference type="ChEBI" id="CHEBI:57597"/>
    </ligand>
</feature>
<feature type="binding site" evidence="1">
    <location>
        <position position="85"/>
    </location>
    <ligand>
        <name>glycerol</name>
        <dbReference type="ChEBI" id="CHEBI:17754"/>
    </ligand>
</feature>
<feature type="binding site" evidence="1">
    <location>
        <position position="85"/>
    </location>
    <ligand>
        <name>sn-glycerol 3-phosphate</name>
        <dbReference type="ChEBI" id="CHEBI:57597"/>
    </ligand>
</feature>
<feature type="binding site" evidence="1">
    <location>
        <position position="136"/>
    </location>
    <ligand>
        <name>glycerol</name>
        <dbReference type="ChEBI" id="CHEBI:17754"/>
    </ligand>
</feature>
<feature type="binding site" evidence="1">
    <location>
        <position position="136"/>
    </location>
    <ligand>
        <name>sn-glycerol 3-phosphate</name>
        <dbReference type="ChEBI" id="CHEBI:57597"/>
    </ligand>
</feature>
<feature type="binding site" evidence="1">
    <location>
        <position position="246"/>
    </location>
    <ligand>
        <name>glycerol</name>
        <dbReference type="ChEBI" id="CHEBI:17754"/>
    </ligand>
</feature>
<feature type="binding site" evidence="1">
    <location>
        <position position="246"/>
    </location>
    <ligand>
        <name>sn-glycerol 3-phosphate</name>
        <dbReference type="ChEBI" id="CHEBI:57597"/>
    </ligand>
</feature>
<feature type="binding site" evidence="1">
    <location>
        <position position="247"/>
    </location>
    <ligand>
        <name>glycerol</name>
        <dbReference type="ChEBI" id="CHEBI:17754"/>
    </ligand>
</feature>
<feature type="binding site" evidence="1">
    <location>
        <position position="268"/>
    </location>
    <ligand>
        <name>ADP</name>
        <dbReference type="ChEBI" id="CHEBI:456216"/>
    </ligand>
</feature>
<feature type="binding site" evidence="1">
    <location>
        <position position="268"/>
    </location>
    <ligand>
        <name>ATP</name>
        <dbReference type="ChEBI" id="CHEBI:30616"/>
    </ligand>
</feature>
<feature type="binding site" evidence="1">
    <location>
        <position position="311"/>
    </location>
    <ligand>
        <name>ADP</name>
        <dbReference type="ChEBI" id="CHEBI:456216"/>
    </ligand>
</feature>
<feature type="binding site" evidence="1">
    <location>
        <position position="311"/>
    </location>
    <ligand>
        <name>ATP</name>
        <dbReference type="ChEBI" id="CHEBI:30616"/>
    </ligand>
</feature>
<feature type="binding site" evidence="1">
    <location>
        <position position="315"/>
    </location>
    <ligand>
        <name>ATP</name>
        <dbReference type="ChEBI" id="CHEBI:30616"/>
    </ligand>
</feature>
<feature type="binding site" evidence="1">
    <location>
        <position position="412"/>
    </location>
    <ligand>
        <name>ADP</name>
        <dbReference type="ChEBI" id="CHEBI:456216"/>
    </ligand>
</feature>
<feature type="binding site" evidence="1">
    <location>
        <position position="412"/>
    </location>
    <ligand>
        <name>ATP</name>
        <dbReference type="ChEBI" id="CHEBI:30616"/>
    </ligand>
</feature>
<feature type="binding site" evidence="1">
    <location>
        <position position="416"/>
    </location>
    <ligand>
        <name>ADP</name>
        <dbReference type="ChEBI" id="CHEBI:456216"/>
    </ligand>
</feature>
<reference key="1">
    <citation type="journal article" date="2008" name="PLoS ONE">
        <title>A recalibrated molecular clock and independent origins for the cholera pandemic clones.</title>
        <authorList>
            <person name="Feng L."/>
            <person name="Reeves P.R."/>
            <person name="Lan R."/>
            <person name="Ren Y."/>
            <person name="Gao C."/>
            <person name="Zhou Z."/>
            <person name="Ren Y."/>
            <person name="Cheng J."/>
            <person name="Wang W."/>
            <person name="Wang J."/>
            <person name="Qian W."/>
            <person name="Li D."/>
            <person name="Wang L."/>
        </authorList>
    </citation>
    <scope>NUCLEOTIDE SEQUENCE [LARGE SCALE GENOMIC DNA]</scope>
    <source>
        <strain>M66-2</strain>
    </source>
</reference>
<keyword id="KW-0067">ATP-binding</keyword>
<keyword id="KW-0319">Glycerol metabolism</keyword>
<keyword id="KW-0418">Kinase</keyword>
<keyword id="KW-0547">Nucleotide-binding</keyword>
<keyword id="KW-0808">Transferase</keyword>
<dbReference type="EC" id="2.7.1.30" evidence="1"/>
<dbReference type="EMBL" id="CP001234">
    <property type="protein sequence ID" value="ACP07665.1"/>
    <property type="molecule type" value="Genomic_DNA"/>
</dbReference>
<dbReference type="RefSeq" id="WP_000139396.1">
    <property type="nucleotide sequence ID" value="NC_012580.1"/>
</dbReference>
<dbReference type="SMR" id="C3LW10"/>
<dbReference type="KEGG" id="vcm:VCM66_A0703"/>
<dbReference type="HOGENOM" id="CLU_009281_2_3_6"/>
<dbReference type="UniPathway" id="UPA00618">
    <property type="reaction ID" value="UER00672"/>
</dbReference>
<dbReference type="Proteomes" id="UP000001217">
    <property type="component" value="Chromosome II"/>
</dbReference>
<dbReference type="GO" id="GO:0005829">
    <property type="term" value="C:cytosol"/>
    <property type="evidence" value="ECO:0007669"/>
    <property type="project" value="TreeGrafter"/>
</dbReference>
<dbReference type="GO" id="GO:0005524">
    <property type="term" value="F:ATP binding"/>
    <property type="evidence" value="ECO:0007669"/>
    <property type="project" value="UniProtKB-UniRule"/>
</dbReference>
<dbReference type="GO" id="GO:0004370">
    <property type="term" value="F:glycerol kinase activity"/>
    <property type="evidence" value="ECO:0000250"/>
    <property type="project" value="UniProtKB"/>
</dbReference>
<dbReference type="GO" id="GO:0019563">
    <property type="term" value="P:glycerol catabolic process"/>
    <property type="evidence" value="ECO:0007669"/>
    <property type="project" value="UniProtKB-UniRule"/>
</dbReference>
<dbReference type="GO" id="GO:0006071">
    <property type="term" value="P:glycerol metabolic process"/>
    <property type="evidence" value="ECO:0000250"/>
    <property type="project" value="UniProtKB"/>
</dbReference>
<dbReference type="GO" id="GO:0006072">
    <property type="term" value="P:glycerol-3-phosphate metabolic process"/>
    <property type="evidence" value="ECO:0007669"/>
    <property type="project" value="InterPro"/>
</dbReference>
<dbReference type="CDD" id="cd07769">
    <property type="entry name" value="ASKHA_NBD_FGGY_GK"/>
    <property type="match status" value="1"/>
</dbReference>
<dbReference type="FunFam" id="3.30.420.40:FF:000007">
    <property type="entry name" value="Glycerol kinase"/>
    <property type="match status" value="1"/>
</dbReference>
<dbReference type="FunFam" id="3.30.420.40:FF:000008">
    <property type="entry name" value="Glycerol kinase"/>
    <property type="match status" value="1"/>
</dbReference>
<dbReference type="Gene3D" id="3.30.420.40">
    <property type="match status" value="2"/>
</dbReference>
<dbReference type="HAMAP" id="MF_00186">
    <property type="entry name" value="Glycerol_kin"/>
    <property type="match status" value="1"/>
</dbReference>
<dbReference type="InterPro" id="IPR043129">
    <property type="entry name" value="ATPase_NBD"/>
</dbReference>
<dbReference type="InterPro" id="IPR000577">
    <property type="entry name" value="Carb_kinase_FGGY"/>
</dbReference>
<dbReference type="InterPro" id="IPR018483">
    <property type="entry name" value="Carb_kinase_FGGY_CS"/>
</dbReference>
<dbReference type="InterPro" id="IPR018485">
    <property type="entry name" value="FGGY_C"/>
</dbReference>
<dbReference type="InterPro" id="IPR018484">
    <property type="entry name" value="FGGY_N"/>
</dbReference>
<dbReference type="InterPro" id="IPR005999">
    <property type="entry name" value="Glycerol_kin"/>
</dbReference>
<dbReference type="NCBIfam" id="TIGR01311">
    <property type="entry name" value="glycerol_kin"/>
    <property type="match status" value="1"/>
</dbReference>
<dbReference type="NCBIfam" id="NF000756">
    <property type="entry name" value="PRK00047.1"/>
    <property type="match status" value="1"/>
</dbReference>
<dbReference type="PANTHER" id="PTHR10196:SF69">
    <property type="entry name" value="GLYCEROL KINASE"/>
    <property type="match status" value="1"/>
</dbReference>
<dbReference type="PANTHER" id="PTHR10196">
    <property type="entry name" value="SUGAR KINASE"/>
    <property type="match status" value="1"/>
</dbReference>
<dbReference type="Pfam" id="PF02782">
    <property type="entry name" value="FGGY_C"/>
    <property type="match status" value="1"/>
</dbReference>
<dbReference type="Pfam" id="PF00370">
    <property type="entry name" value="FGGY_N"/>
    <property type="match status" value="1"/>
</dbReference>
<dbReference type="PIRSF" id="PIRSF000538">
    <property type="entry name" value="GlpK"/>
    <property type="match status" value="1"/>
</dbReference>
<dbReference type="SUPFAM" id="SSF53067">
    <property type="entry name" value="Actin-like ATPase domain"/>
    <property type="match status" value="2"/>
</dbReference>
<dbReference type="PROSITE" id="PS00933">
    <property type="entry name" value="FGGY_KINASES_1"/>
    <property type="match status" value="1"/>
</dbReference>
<dbReference type="PROSITE" id="PS00445">
    <property type="entry name" value="FGGY_KINASES_2"/>
    <property type="match status" value="1"/>
</dbReference>
<gene>
    <name evidence="1" type="primary">glpK</name>
    <name type="ordered locus">VCM66_A0703</name>
</gene>